<comment type="function">
    <text evidence="1">Catalyzes the reversible phosphorylation of S-methyl-5'-thioadenosine (MTA) to adenine and 5-methylthioribose-1-phosphate. Involved in the breakdown of MTA, a major by-product of polyamine biosynthesis. Responsible for the first step in the methionine salvage pathway after MTA has been generated from S-adenosylmethionine. Has broad substrate specificity with 6-aminopurine nucleosides as preferred substrates.</text>
</comment>
<comment type="catalytic activity">
    <reaction evidence="1">
        <text>S-methyl-5'-thioadenosine + phosphate = 5-(methylsulfanyl)-alpha-D-ribose 1-phosphate + adenine</text>
        <dbReference type="Rhea" id="RHEA:11852"/>
        <dbReference type="ChEBI" id="CHEBI:16708"/>
        <dbReference type="ChEBI" id="CHEBI:17509"/>
        <dbReference type="ChEBI" id="CHEBI:43474"/>
        <dbReference type="ChEBI" id="CHEBI:58533"/>
        <dbReference type="EC" id="2.4.2.28"/>
    </reaction>
</comment>
<comment type="pathway">
    <text evidence="1">Amino-acid biosynthesis; L-methionine biosynthesis via salvage pathway; S-methyl-5-thio-alpha-D-ribose 1-phosphate from S-methyl-5'-thioadenosine (phosphorylase route): step 1/1.</text>
</comment>
<comment type="subunit">
    <text evidence="1">Homohexamer. Dimer of a homotrimer.</text>
</comment>
<comment type="similarity">
    <text evidence="1">Belongs to the PNP/MTAP phosphorylase family. MTAP subfamily.</text>
</comment>
<feature type="chain" id="PRO_0000415102" description="S-methyl-5'-thioadenosine phosphorylase">
    <location>
        <begin position="1"/>
        <end position="275"/>
    </location>
</feature>
<feature type="binding site" evidence="1">
    <location>
        <position position="20"/>
    </location>
    <ligand>
        <name>phosphate</name>
        <dbReference type="ChEBI" id="CHEBI:43474"/>
    </ligand>
</feature>
<feature type="binding site" evidence="1">
    <location>
        <begin position="62"/>
        <end position="63"/>
    </location>
    <ligand>
        <name>phosphate</name>
        <dbReference type="ChEBI" id="CHEBI:43474"/>
    </ligand>
</feature>
<feature type="binding site" evidence="1">
    <location>
        <begin position="95"/>
        <end position="96"/>
    </location>
    <ligand>
        <name>phosphate</name>
        <dbReference type="ChEBI" id="CHEBI:43474"/>
    </ligand>
</feature>
<feature type="binding site" evidence="1">
    <location>
        <position position="195"/>
    </location>
    <ligand>
        <name>substrate</name>
    </ligand>
</feature>
<feature type="binding site" evidence="1">
    <location>
        <position position="196"/>
    </location>
    <ligand>
        <name>phosphate</name>
        <dbReference type="ChEBI" id="CHEBI:43474"/>
    </ligand>
</feature>
<feature type="binding site" evidence="1">
    <location>
        <begin position="219"/>
        <end position="221"/>
    </location>
    <ligand>
        <name>substrate</name>
    </ligand>
</feature>
<feature type="site" description="Important for substrate specificity" evidence="1">
    <location>
        <position position="176"/>
    </location>
</feature>
<feature type="site" description="Important for substrate specificity" evidence="1">
    <location>
        <position position="230"/>
    </location>
</feature>
<feature type="disulfide bond">
    <location>
        <begin position="143"/>
        <end position="210"/>
    </location>
</feature>
<feature type="disulfide bond">
    <location>
        <begin position="205"/>
        <end position="266"/>
    </location>
</feature>
<feature type="disulfide bond">
    <location>
        <begin position="264"/>
        <end position="267"/>
    </location>
</feature>
<feature type="strand" evidence="3">
    <location>
        <begin position="5"/>
        <end position="7"/>
    </location>
</feature>
<feature type="strand" evidence="3">
    <location>
        <begin position="13"/>
        <end position="18"/>
    </location>
</feature>
<feature type="helix" evidence="2">
    <location>
        <begin position="20"/>
        <end position="22"/>
    </location>
</feature>
<feature type="turn" evidence="2">
    <location>
        <begin position="25"/>
        <end position="27"/>
    </location>
</feature>
<feature type="strand" evidence="3">
    <location>
        <begin position="29"/>
        <end position="36"/>
    </location>
</feature>
<feature type="strand" evidence="3">
    <location>
        <begin position="47"/>
        <end position="52"/>
    </location>
</feature>
<feature type="strand" evidence="3">
    <location>
        <begin position="55"/>
        <end position="61"/>
    </location>
</feature>
<feature type="turn" evidence="3">
    <location>
        <begin position="62"/>
        <end position="67"/>
    </location>
</feature>
<feature type="helix" evidence="3">
    <location>
        <begin position="71"/>
        <end position="73"/>
    </location>
</feature>
<feature type="helix" evidence="3">
    <location>
        <begin position="76"/>
        <end position="85"/>
    </location>
</feature>
<feature type="strand" evidence="3">
    <location>
        <begin position="90"/>
        <end position="101"/>
    </location>
</feature>
<feature type="strand" evidence="3">
    <location>
        <begin position="114"/>
        <end position="118"/>
    </location>
</feature>
<feature type="strand" evidence="3">
    <location>
        <begin position="130"/>
        <end position="132"/>
    </location>
</feature>
<feature type="helix" evidence="3">
    <location>
        <begin position="144"/>
        <end position="157"/>
    </location>
</feature>
<feature type="strand" evidence="3">
    <location>
        <begin position="161"/>
        <end position="163"/>
    </location>
</feature>
<feature type="strand" evidence="3">
    <location>
        <begin position="166"/>
        <end position="170"/>
    </location>
</feature>
<feature type="helix" evidence="3">
    <location>
        <begin position="178"/>
        <end position="186"/>
    </location>
</feature>
<feature type="strand" evidence="3">
    <location>
        <begin position="192"/>
        <end position="196"/>
    </location>
</feature>
<feature type="helix" evidence="3">
    <location>
        <begin position="197"/>
        <end position="206"/>
    </location>
</feature>
<feature type="strand" evidence="3">
    <location>
        <begin position="210"/>
        <end position="219"/>
    </location>
</feature>
<feature type="strand" evidence="3">
    <location>
        <begin position="224"/>
        <end position="226"/>
    </location>
</feature>
<feature type="helix" evidence="3">
    <location>
        <begin position="230"/>
        <end position="251"/>
    </location>
</feature>
<feature type="helix" evidence="3">
    <location>
        <begin position="252"/>
        <end position="255"/>
    </location>
</feature>
<feature type="helix" evidence="3">
    <location>
        <begin position="261"/>
        <end position="263"/>
    </location>
</feature>
<feature type="turn" evidence="3">
    <location>
        <begin position="265"/>
        <end position="269"/>
    </location>
</feature>
<feature type="helix" evidence="3">
    <location>
        <begin position="270"/>
        <end position="273"/>
    </location>
</feature>
<protein>
    <recommendedName>
        <fullName evidence="1">S-methyl-5'-thioadenosine phosphorylase</fullName>
        <ecNumber evidence="1">2.4.2.28</ecNumber>
    </recommendedName>
    <alternativeName>
        <fullName evidence="1">5'-methylthioadenosine phosphorylase</fullName>
        <shortName evidence="1">MTA phosphorylase</shortName>
        <shortName evidence="1">MTAP</shortName>
    </alternativeName>
</protein>
<name>MTAP_AERPE</name>
<gene>
    <name evidence="1" type="primary">mtnP</name>
    <name type="ordered locus">APE_1885</name>
</gene>
<keyword id="KW-0002">3D-structure</keyword>
<keyword id="KW-1015">Disulfide bond</keyword>
<keyword id="KW-0328">Glycosyltransferase</keyword>
<keyword id="KW-0660">Purine salvage</keyword>
<keyword id="KW-1185">Reference proteome</keyword>
<keyword id="KW-0808">Transferase</keyword>
<sequence length="275" mass="30737">MFEITRPPGVRAHVGVIGGSGLYDPGIVENPVEVKVSTPYGNPSDFIVVGDVAGVKVAFLPRHGRGHRIPPHAINYRANIWALKALGVKWVISVSAVGSLREDYRPGDFVVPDQFIDMTKNRRHYTFYDGPVTVHVSMADPFCEDLRQRLIDSGRRLGYTVHERGTYVCIEGPRFSTRAESRVWKDVFKADIIGMTLVPEINLACEAQLCYATLAMVTDYDVWADRPVTAEEVERVMISNVERARRMLYDVIPKLAGEPELERCSCCRALDTAAI</sequence>
<evidence type="ECO:0000255" key="1">
    <source>
        <dbReference type="HAMAP-Rule" id="MF_01963"/>
    </source>
</evidence>
<evidence type="ECO:0007829" key="2">
    <source>
        <dbReference type="PDB" id="1WTA"/>
    </source>
</evidence>
<evidence type="ECO:0007829" key="3">
    <source>
        <dbReference type="PDB" id="9JD2"/>
    </source>
</evidence>
<proteinExistence type="evidence at protein level"/>
<organism>
    <name type="scientific">Aeropyrum pernix (strain ATCC 700893 / DSM 11879 / JCM 9820 / NBRC 100138 / K1)</name>
    <dbReference type="NCBI Taxonomy" id="272557"/>
    <lineage>
        <taxon>Archaea</taxon>
        <taxon>Thermoproteota</taxon>
        <taxon>Thermoprotei</taxon>
        <taxon>Desulfurococcales</taxon>
        <taxon>Desulfurococcaceae</taxon>
        <taxon>Aeropyrum</taxon>
    </lineage>
</organism>
<accession>Q9YAQ8</accession>
<reference key="1">
    <citation type="journal article" date="1999" name="DNA Res.">
        <title>Complete genome sequence of an aerobic hyper-thermophilic crenarchaeon, Aeropyrum pernix K1.</title>
        <authorList>
            <person name="Kawarabayasi Y."/>
            <person name="Hino Y."/>
            <person name="Horikawa H."/>
            <person name="Yamazaki S."/>
            <person name="Haikawa Y."/>
            <person name="Jin-no K."/>
            <person name="Takahashi M."/>
            <person name="Sekine M."/>
            <person name="Baba S."/>
            <person name="Ankai A."/>
            <person name="Kosugi H."/>
            <person name="Hosoyama A."/>
            <person name="Fukui S."/>
            <person name="Nagai Y."/>
            <person name="Nishijima K."/>
            <person name="Nakazawa H."/>
            <person name="Takamiya M."/>
            <person name="Masuda S."/>
            <person name="Funahashi T."/>
            <person name="Tanaka T."/>
            <person name="Kudoh Y."/>
            <person name="Yamazaki J."/>
            <person name="Kushida N."/>
            <person name="Oguchi A."/>
            <person name="Aoki K."/>
            <person name="Kubota K."/>
            <person name="Nakamura Y."/>
            <person name="Nomura N."/>
            <person name="Sako Y."/>
            <person name="Kikuchi H."/>
        </authorList>
    </citation>
    <scope>NUCLEOTIDE SEQUENCE [LARGE SCALE GENOMIC DNA]</scope>
    <source>
        <strain>ATCC 700893 / DSM 11879 / JCM 9820 / NBRC 100138 / K1</strain>
    </source>
</reference>
<reference key="2">
    <citation type="submission" date="2004-11" db="PDB data bank">
        <title>Crystal structure of 5'-deoxy-5'-methylthioadenosine from Aeropyrum pernix (R32 form).</title>
        <authorList>
            <person name="Tsunoda M."/>
            <person name="Murakami Y."/>
            <person name="Nakamura K.T."/>
        </authorList>
    </citation>
    <scope>X-RAY CRYSTALLOGRAPHY (1.78 ANGSTROMS) IN COMPLEX WITH PHOSPHATE</scope>
</reference>
<dbReference type="EC" id="2.4.2.28" evidence="1"/>
<dbReference type="EMBL" id="BA000002">
    <property type="protein sequence ID" value="BAA80890.1"/>
    <property type="molecule type" value="Genomic_DNA"/>
</dbReference>
<dbReference type="PIR" id="E72575">
    <property type="entry name" value="E72575"/>
</dbReference>
<dbReference type="RefSeq" id="WP_010866659.1">
    <property type="nucleotide sequence ID" value="NC_000854.2"/>
</dbReference>
<dbReference type="PDB" id="1WTA">
    <property type="method" value="X-ray"/>
    <property type="resolution" value="1.78 A"/>
    <property type="chains" value="A=1-275"/>
</dbReference>
<dbReference type="PDB" id="8WS2">
    <property type="method" value="X-ray"/>
    <property type="resolution" value="1.22 A"/>
    <property type="chains" value="A=1-275"/>
</dbReference>
<dbReference type="PDB" id="9JD2">
    <property type="method" value="X-ray"/>
    <property type="resolution" value="1.62 A"/>
    <property type="chains" value="A=1-275"/>
</dbReference>
<dbReference type="PDB" id="9JHV">
    <property type="method" value="X-ray"/>
    <property type="resolution" value="1.65 A"/>
    <property type="chains" value="A=1-275"/>
</dbReference>
<dbReference type="PDBsum" id="1WTA"/>
<dbReference type="PDBsum" id="8WS2"/>
<dbReference type="PDBsum" id="9JD2"/>
<dbReference type="PDBsum" id="9JHV"/>
<dbReference type="SMR" id="Q9YAQ8"/>
<dbReference type="STRING" id="272557.APE_1885"/>
<dbReference type="EnsemblBacteria" id="BAA80890">
    <property type="protein sequence ID" value="BAA80890"/>
    <property type="gene ID" value="APE_1885"/>
</dbReference>
<dbReference type="GeneID" id="1446318"/>
<dbReference type="KEGG" id="ape:APE_1885"/>
<dbReference type="PATRIC" id="fig|272557.25.peg.1264"/>
<dbReference type="eggNOG" id="arCOG01327">
    <property type="taxonomic scope" value="Archaea"/>
</dbReference>
<dbReference type="UniPathway" id="UPA00904">
    <property type="reaction ID" value="UER00873"/>
</dbReference>
<dbReference type="EvolutionaryTrace" id="Q9YAQ8"/>
<dbReference type="Proteomes" id="UP000002518">
    <property type="component" value="Chromosome"/>
</dbReference>
<dbReference type="GO" id="GO:0005829">
    <property type="term" value="C:cytosol"/>
    <property type="evidence" value="ECO:0007669"/>
    <property type="project" value="TreeGrafter"/>
</dbReference>
<dbReference type="GO" id="GO:0017061">
    <property type="term" value="F:S-methyl-5-thioadenosine phosphorylase activity"/>
    <property type="evidence" value="ECO:0007669"/>
    <property type="project" value="UniProtKB-UniRule"/>
</dbReference>
<dbReference type="GO" id="GO:0019509">
    <property type="term" value="P:L-methionine salvage from methylthioadenosine"/>
    <property type="evidence" value="ECO:0007669"/>
    <property type="project" value="UniProtKB-UniRule"/>
</dbReference>
<dbReference type="GO" id="GO:0006166">
    <property type="term" value="P:purine ribonucleoside salvage"/>
    <property type="evidence" value="ECO:0007669"/>
    <property type="project" value="UniProtKB-KW"/>
</dbReference>
<dbReference type="CDD" id="cd09010">
    <property type="entry name" value="MTAP_SsMTAPII_like_MTIP"/>
    <property type="match status" value="1"/>
</dbReference>
<dbReference type="FunFam" id="3.40.50.1580:FF:000012">
    <property type="entry name" value="Probable 6-oxopurine nucleoside phosphorylase"/>
    <property type="match status" value="1"/>
</dbReference>
<dbReference type="Gene3D" id="3.40.50.1580">
    <property type="entry name" value="Nucleoside phosphorylase domain"/>
    <property type="match status" value="1"/>
</dbReference>
<dbReference type="HAMAP" id="MF_01963">
    <property type="entry name" value="MTAP"/>
    <property type="match status" value="1"/>
</dbReference>
<dbReference type="InterPro" id="IPR010044">
    <property type="entry name" value="MTAP"/>
</dbReference>
<dbReference type="InterPro" id="IPR000845">
    <property type="entry name" value="Nucleoside_phosphorylase_d"/>
</dbReference>
<dbReference type="InterPro" id="IPR035994">
    <property type="entry name" value="Nucleoside_phosphorylase_sf"/>
</dbReference>
<dbReference type="InterPro" id="IPR018099">
    <property type="entry name" value="Purine_phosphorylase-2_CS"/>
</dbReference>
<dbReference type="NCBIfam" id="TIGR01694">
    <property type="entry name" value="MTAP"/>
    <property type="match status" value="1"/>
</dbReference>
<dbReference type="NCBIfam" id="NF006334">
    <property type="entry name" value="PRK08564.1"/>
    <property type="match status" value="1"/>
</dbReference>
<dbReference type="PANTHER" id="PTHR42679">
    <property type="entry name" value="S-METHYL-5'-THIOADENOSINE PHOSPHORYLASE"/>
    <property type="match status" value="1"/>
</dbReference>
<dbReference type="PANTHER" id="PTHR42679:SF3">
    <property type="entry name" value="S-METHYL-5'-THIOADENOSINE PHOSPHORYLASE"/>
    <property type="match status" value="1"/>
</dbReference>
<dbReference type="Pfam" id="PF01048">
    <property type="entry name" value="PNP_UDP_1"/>
    <property type="match status" value="1"/>
</dbReference>
<dbReference type="SUPFAM" id="SSF53167">
    <property type="entry name" value="Purine and uridine phosphorylases"/>
    <property type="match status" value="1"/>
</dbReference>
<dbReference type="PROSITE" id="PS01240">
    <property type="entry name" value="PNP_MTAP_2"/>
    <property type="match status" value="1"/>
</dbReference>